<organism>
    <name type="scientific">Salmonella schwarzengrund (strain CVM19633)</name>
    <dbReference type="NCBI Taxonomy" id="439843"/>
    <lineage>
        <taxon>Bacteria</taxon>
        <taxon>Pseudomonadati</taxon>
        <taxon>Pseudomonadota</taxon>
        <taxon>Gammaproteobacteria</taxon>
        <taxon>Enterobacterales</taxon>
        <taxon>Enterobacteriaceae</taxon>
        <taxon>Salmonella</taxon>
    </lineage>
</organism>
<proteinExistence type="inferred from homology"/>
<gene>
    <name evidence="1" type="primary">sulA</name>
    <name type="ordered locus">SeSA_A1134</name>
</gene>
<accession>B4TSI4</accession>
<feature type="chain" id="PRO_1000138171" description="Cell division inhibitor SulA">
    <location>
        <begin position="1"/>
        <end position="169"/>
    </location>
</feature>
<feature type="region of interest" description="FtsZ binding" evidence="1">
    <location>
        <begin position="106"/>
        <end position="112"/>
    </location>
</feature>
<feature type="region of interest" description="Lon protease binding" evidence="1">
    <location>
        <begin position="162"/>
        <end position="169"/>
    </location>
</feature>
<feature type="site" description="Essential for degradation by Lon protease" evidence="1">
    <location>
        <position position="169"/>
    </location>
</feature>
<name>SULA_SALSV</name>
<protein>
    <recommendedName>
        <fullName evidence="1">Cell division inhibitor SulA</fullName>
    </recommendedName>
</protein>
<sequence>MYTSGYANRSSSFPTTTHNAARTATENAAAGLVSEVVYHEDQPMMAQLLLLPLLRQLGQQSRWQLWLTPQQKLSREWVQSSGLPLTKVMQISQLAPRHTLESMIRALRTGNYSVVIGWMTEELTEEEHASLVEAAKVGNAVGFIMRPVRAHALPRRQHSGLKIHSNLYH</sequence>
<comment type="function">
    <text evidence="1">Component of the SOS system and an inhibitor of cell division. Accumulation of SulA causes rapid cessation of cell division and the appearance of long, non-septate filaments. In the presence of GTP, binds a polymerization-competent form of FtsZ in a 1:1 ratio, thus inhibiting FtsZ polymerization and therefore preventing it from participating in the assembly of the Z ring. This mechanism prevents the premature segregation of damaged DNA to daughter cells during cell division.</text>
</comment>
<comment type="subunit">
    <text evidence="1">Interacts with FtsZ.</text>
</comment>
<comment type="induction">
    <text evidence="1">By DNA damage, as part of the SOS response.</text>
</comment>
<comment type="PTM">
    <text evidence="1">Is rapidly cleaved and degraded by the Lon protease once DNA damage is repaired.</text>
</comment>
<comment type="similarity">
    <text evidence="1">Belongs to the SulA family.</text>
</comment>
<evidence type="ECO:0000255" key="1">
    <source>
        <dbReference type="HAMAP-Rule" id="MF_01179"/>
    </source>
</evidence>
<reference key="1">
    <citation type="journal article" date="2011" name="J. Bacteriol.">
        <title>Comparative genomics of 28 Salmonella enterica isolates: evidence for CRISPR-mediated adaptive sublineage evolution.</title>
        <authorList>
            <person name="Fricke W.F."/>
            <person name="Mammel M.K."/>
            <person name="McDermott P.F."/>
            <person name="Tartera C."/>
            <person name="White D.G."/>
            <person name="Leclerc J.E."/>
            <person name="Ravel J."/>
            <person name="Cebula T.A."/>
        </authorList>
    </citation>
    <scope>NUCLEOTIDE SEQUENCE [LARGE SCALE GENOMIC DNA]</scope>
    <source>
        <strain>CVM19633</strain>
    </source>
</reference>
<keyword id="KW-0131">Cell cycle</keyword>
<keyword id="KW-0132">Cell division</keyword>
<keyword id="KW-0227">DNA damage</keyword>
<keyword id="KW-0717">Septation</keyword>
<keyword id="KW-0742">SOS response</keyword>
<dbReference type="EMBL" id="CP001127">
    <property type="protein sequence ID" value="ACF89015.1"/>
    <property type="molecule type" value="Genomic_DNA"/>
</dbReference>
<dbReference type="RefSeq" id="WP_000288732.1">
    <property type="nucleotide sequence ID" value="NC_011094.1"/>
</dbReference>
<dbReference type="SMR" id="B4TSI4"/>
<dbReference type="KEGG" id="sew:SeSA_A1134"/>
<dbReference type="HOGENOM" id="CLU_118972_1_0_6"/>
<dbReference type="Proteomes" id="UP000001865">
    <property type="component" value="Chromosome"/>
</dbReference>
<dbReference type="GO" id="GO:0000917">
    <property type="term" value="P:division septum assembly"/>
    <property type="evidence" value="ECO:0007669"/>
    <property type="project" value="UniProtKB-KW"/>
</dbReference>
<dbReference type="GO" id="GO:0006281">
    <property type="term" value="P:DNA repair"/>
    <property type="evidence" value="ECO:0007669"/>
    <property type="project" value="TreeGrafter"/>
</dbReference>
<dbReference type="GO" id="GO:0051782">
    <property type="term" value="P:negative regulation of cell division"/>
    <property type="evidence" value="ECO:0007669"/>
    <property type="project" value="UniProtKB-UniRule"/>
</dbReference>
<dbReference type="GO" id="GO:0009432">
    <property type="term" value="P:SOS response"/>
    <property type="evidence" value="ECO:0007669"/>
    <property type="project" value="UniProtKB-UniRule"/>
</dbReference>
<dbReference type="FunFam" id="3.40.50.300:FF:000417">
    <property type="entry name" value="Cell division inhibitor SulA"/>
    <property type="match status" value="1"/>
</dbReference>
<dbReference type="Gene3D" id="3.40.50.300">
    <property type="entry name" value="P-loop containing nucleotide triphosphate hydrolases"/>
    <property type="match status" value="1"/>
</dbReference>
<dbReference type="HAMAP" id="MF_01179">
    <property type="entry name" value="SulA"/>
    <property type="match status" value="1"/>
</dbReference>
<dbReference type="InterPro" id="IPR004596">
    <property type="entry name" value="Cell_div_suppressor_SulA"/>
</dbReference>
<dbReference type="InterPro" id="IPR027417">
    <property type="entry name" value="P-loop_NTPase"/>
</dbReference>
<dbReference type="InterPro" id="IPR050356">
    <property type="entry name" value="SulA_CellDiv_inhibitor"/>
</dbReference>
<dbReference type="InterPro" id="IPR047696">
    <property type="entry name" value="SulA_enterobact"/>
</dbReference>
<dbReference type="NCBIfam" id="NF007892">
    <property type="entry name" value="PRK10595.1"/>
    <property type="match status" value="1"/>
</dbReference>
<dbReference type="NCBIfam" id="TIGR00623">
    <property type="entry name" value="SOS_SulA_coli"/>
    <property type="match status" value="1"/>
</dbReference>
<dbReference type="PANTHER" id="PTHR35369">
    <property type="entry name" value="BLR3025 PROTEIN-RELATED"/>
    <property type="match status" value="1"/>
</dbReference>
<dbReference type="PANTHER" id="PTHR35369:SF4">
    <property type="entry name" value="CELL DIVISION INHIBITOR SULA"/>
    <property type="match status" value="1"/>
</dbReference>
<dbReference type="Pfam" id="PF03846">
    <property type="entry name" value="SulA"/>
    <property type="match status" value="1"/>
</dbReference>
<dbReference type="PIRSF" id="PIRSF003093">
    <property type="entry name" value="SulA"/>
    <property type="match status" value="1"/>
</dbReference>
<dbReference type="SUPFAM" id="SSF52540">
    <property type="entry name" value="P-loop containing nucleoside triphosphate hydrolases"/>
    <property type="match status" value="1"/>
</dbReference>